<organism>
    <name type="scientific">Chloroflexus aurantiacus (strain ATCC 29364 / DSM 637 / Y-400-fl)</name>
    <dbReference type="NCBI Taxonomy" id="480224"/>
    <lineage>
        <taxon>Bacteria</taxon>
        <taxon>Bacillati</taxon>
        <taxon>Chloroflexota</taxon>
        <taxon>Chloroflexia</taxon>
        <taxon>Chloroflexales</taxon>
        <taxon>Chloroflexineae</taxon>
        <taxon>Chloroflexaceae</taxon>
        <taxon>Chloroflexus</taxon>
    </lineage>
</organism>
<accession>B9LIB5</accession>
<gene>
    <name evidence="1" type="primary">rplT</name>
    <name type="ordered locus">Chy400_0411</name>
</gene>
<comment type="function">
    <text evidence="1">Binds directly to 23S ribosomal RNA and is necessary for the in vitro assembly process of the 50S ribosomal subunit. It is not involved in the protein synthesizing functions of that subunit.</text>
</comment>
<comment type="similarity">
    <text evidence="1">Belongs to the bacterial ribosomal protein bL20 family.</text>
</comment>
<name>RL20_CHLSY</name>
<proteinExistence type="inferred from homology"/>
<feature type="chain" id="PRO_1000193948" description="Large ribosomal subunit protein bL20">
    <location>
        <begin position="1"/>
        <end position="119"/>
    </location>
</feature>
<sequence length="119" mass="13932">MARVKRGIMVRKRHKKLLEQAKGYRGARSRHYKVAHEAVMHALADAYRDRRRRKRDFRRLWIMRINAAARLHGTTYSRLINSLKQANIEIDRKMLADLAVRDPQAFARIVEQAQAAVTA</sequence>
<evidence type="ECO:0000255" key="1">
    <source>
        <dbReference type="HAMAP-Rule" id="MF_00382"/>
    </source>
</evidence>
<evidence type="ECO:0000305" key="2"/>
<keyword id="KW-0687">Ribonucleoprotein</keyword>
<keyword id="KW-0689">Ribosomal protein</keyword>
<keyword id="KW-0694">RNA-binding</keyword>
<keyword id="KW-0699">rRNA-binding</keyword>
<dbReference type="EMBL" id="CP001364">
    <property type="protein sequence ID" value="ACM51850.1"/>
    <property type="molecule type" value="Genomic_DNA"/>
</dbReference>
<dbReference type="SMR" id="B9LIB5"/>
<dbReference type="KEGG" id="chl:Chy400_0411"/>
<dbReference type="HOGENOM" id="CLU_123265_0_1_0"/>
<dbReference type="OrthoDB" id="9808966at2"/>
<dbReference type="GO" id="GO:1990904">
    <property type="term" value="C:ribonucleoprotein complex"/>
    <property type="evidence" value="ECO:0007669"/>
    <property type="project" value="UniProtKB-KW"/>
</dbReference>
<dbReference type="GO" id="GO:0005840">
    <property type="term" value="C:ribosome"/>
    <property type="evidence" value="ECO:0007669"/>
    <property type="project" value="UniProtKB-KW"/>
</dbReference>
<dbReference type="GO" id="GO:0019843">
    <property type="term" value="F:rRNA binding"/>
    <property type="evidence" value="ECO:0007669"/>
    <property type="project" value="UniProtKB-UniRule"/>
</dbReference>
<dbReference type="GO" id="GO:0003735">
    <property type="term" value="F:structural constituent of ribosome"/>
    <property type="evidence" value="ECO:0007669"/>
    <property type="project" value="InterPro"/>
</dbReference>
<dbReference type="GO" id="GO:0000027">
    <property type="term" value="P:ribosomal large subunit assembly"/>
    <property type="evidence" value="ECO:0007669"/>
    <property type="project" value="UniProtKB-UniRule"/>
</dbReference>
<dbReference type="GO" id="GO:0006412">
    <property type="term" value="P:translation"/>
    <property type="evidence" value="ECO:0007669"/>
    <property type="project" value="InterPro"/>
</dbReference>
<dbReference type="CDD" id="cd07026">
    <property type="entry name" value="Ribosomal_L20"/>
    <property type="match status" value="1"/>
</dbReference>
<dbReference type="FunFam" id="1.10.1900.20:FF:000001">
    <property type="entry name" value="50S ribosomal protein L20"/>
    <property type="match status" value="1"/>
</dbReference>
<dbReference type="Gene3D" id="6.10.160.10">
    <property type="match status" value="1"/>
</dbReference>
<dbReference type="Gene3D" id="1.10.1900.20">
    <property type="entry name" value="Ribosomal protein L20"/>
    <property type="match status" value="1"/>
</dbReference>
<dbReference type="HAMAP" id="MF_00382">
    <property type="entry name" value="Ribosomal_bL20"/>
    <property type="match status" value="1"/>
</dbReference>
<dbReference type="InterPro" id="IPR005813">
    <property type="entry name" value="Ribosomal_bL20"/>
</dbReference>
<dbReference type="InterPro" id="IPR049946">
    <property type="entry name" value="RIBOSOMAL_L20_CS"/>
</dbReference>
<dbReference type="InterPro" id="IPR035566">
    <property type="entry name" value="Ribosomal_protein_bL20_C"/>
</dbReference>
<dbReference type="NCBIfam" id="TIGR01032">
    <property type="entry name" value="rplT_bact"/>
    <property type="match status" value="1"/>
</dbReference>
<dbReference type="PANTHER" id="PTHR10986">
    <property type="entry name" value="39S RIBOSOMAL PROTEIN L20"/>
    <property type="match status" value="1"/>
</dbReference>
<dbReference type="Pfam" id="PF00453">
    <property type="entry name" value="Ribosomal_L20"/>
    <property type="match status" value="1"/>
</dbReference>
<dbReference type="PRINTS" id="PR00062">
    <property type="entry name" value="RIBOSOMALL20"/>
</dbReference>
<dbReference type="SUPFAM" id="SSF74731">
    <property type="entry name" value="Ribosomal protein L20"/>
    <property type="match status" value="1"/>
</dbReference>
<dbReference type="PROSITE" id="PS00937">
    <property type="entry name" value="RIBOSOMAL_L20"/>
    <property type="match status" value="1"/>
</dbReference>
<protein>
    <recommendedName>
        <fullName evidence="1">Large ribosomal subunit protein bL20</fullName>
    </recommendedName>
    <alternativeName>
        <fullName evidence="2">50S ribosomal protein L20</fullName>
    </alternativeName>
</protein>
<reference key="1">
    <citation type="submission" date="2009-01" db="EMBL/GenBank/DDBJ databases">
        <title>Complete sequence of Chloroflexus sp. Y-400-fl.</title>
        <authorList>
            <consortium name="US DOE Joint Genome Institute"/>
            <person name="Lucas S."/>
            <person name="Copeland A."/>
            <person name="Lapidus A."/>
            <person name="Glavina del Rio T."/>
            <person name="Dalin E."/>
            <person name="Tice H."/>
            <person name="Bruce D."/>
            <person name="Goodwin L."/>
            <person name="Pitluck S."/>
            <person name="Sims D."/>
            <person name="Kiss H."/>
            <person name="Brettin T."/>
            <person name="Detter J.C."/>
            <person name="Han C."/>
            <person name="Larimer F."/>
            <person name="Land M."/>
            <person name="Hauser L."/>
            <person name="Kyrpides N."/>
            <person name="Ovchinnikova G."/>
            <person name="Bryant D.A."/>
            <person name="Richardson P."/>
        </authorList>
    </citation>
    <scope>NUCLEOTIDE SEQUENCE [LARGE SCALE GENOMIC DNA]</scope>
    <source>
        <strain>ATCC 29364 / DSM 637 / Y-400-fl</strain>
    </source>
</reference>